<geneLocation type="chloroplast"/>
<comment type="function">
    <text evidence="1">RuBisCO catalyzes two reactions: the carboxylation of D-ribulose 1,5-bisphosphate, the primary event in carbon dioxide fixation, as well as the oxidative fragmentation of the pentose substrate in the photorespiration process. Both reactions occur simultaneously and in competition at the same active site.</text>
</comment>
<comment type="catalytic activity">
    <reaction evidence="1">
        <text>2 (2R)-3-phosphoglycerate + 2 H(+) = D-ribulose 1,5-bisphosphate + CO2 + H2O</text>
        <dbReference type="Rhea" id="RHEA:23124"/>
        <dbReference type="ChEBI" id="CHEBI:15377"/>
        <dbReference type="ChEBI" id="CHEBI:15378"/>
        <dbReference type="ChEBI" id="CHEBI:16526"/>
        <dbReference type="ChEBI" id="CHEBI:57870"/>
        <dbReference type="ChEBI" id="CHEBI:58272"/>
        <dbReference type="EC" id="4.1.1.39"/>
    </reaction>
</comment>
<comment type="catalytic activity">
    <reaction evidence="1">
        <text>D-ribulose 1,5-bisphosphate + O2 = 2-phosphoglycolate + (2R)-3-phosphoglycerate + 2 H(+)</text>
        <dbReference type="Rhea" id="RHEA:36631"/>
        <dbReference type="ChEBI" id="CHEBI:15378"/>
        <dbReference type="ChEBI" id="CHEBI:15379"/>
        <dbReference type="ChEBI" id="CHEBI:57870"/>
        <dbReference type="ChEBI" id="CHEBI:58033"/>
        <dbReference type="ChEBI" id="CHEBI:58272"/>
    </reaction>
</comment>
<comment type="cofactor">
    <cofactor evidence="1">
        <name>Mg(2+)</name>
        <dbReference type="ChEBI" id="CHEBI:18420"/>
    </cofactor>
    <text evidence="1">Binds 1 Mg(2+) ion per subunit.</text>
</comment>
<comment type="subunit">
    <text evidence="1">Heterohexadecamer of 8 large chains and 8 small chains; disulfide-linked. The disulfide link is formed within the large subunit homodimers.</text>
</comment>
<comment type="subcellular location">
    <subcellularLocation>
        <location>Plastid</location>
        <location>Chloroplast</location>
    </subcellularLocation>
</comment>
<comment type="PTM">
    <text evidence="1">The disulfide bond which can form in the large chain dimeric partners within the hexadecamer appears to be associated with oxidative stress and protein turnover.</text>
</comment>
<comment type="miscellaneous">
    <text evidence="1">The basic functional RuBisCO is composed of a large chain homodimer in a 'head-to-tail' conformation. In form I RuBisCO this homodimer is arranged in a barrel-like tetramer with the small subunits forming a tetrameric 'cap' on each end of the 'barrel'.</text>
</comment>
<comment type="similarity">
    <text evidence="1">Belongs to the RuBisCO large chain family. Type I subfamily.</text>
</comment>
<feature type="propeptide" id="PRO_0000031189" evidence="1">
    <location>
        <begin position="1"/>
        <end position="2"/>
    </location>
</feature>
<feature type="chain" id="PRO_0000031190" description="Ribulose bisphosphate carboxylase large chain">
    <location>
        <begin position="3"/>
        <end position="459" status="greater than"/>
    </location>
</feature>
<feature type="active site" description="Proton acceptor" evidence="1">
    <location>
        <position position="175"/>
    </location>
</feature>
<feature type="active site" description="Proton acceptor" evidence="1">
    <location>
        <position position="294"/>
    </location>
</feature>
<feature type="binding site" description="in homodimeric partner" evidence="1">
    <location>
        <position position="123"/>
    </location>
    <ligand>
        <name>substrate</name>
    </ligand>
</feature>
<feature type="binding site" evidence="1">
    <location>
        <position position="173"/>
    </location>
    <ligand>
        <name>substrate</name>
    </ligand>
</feature>
<feature type="binding site" evidence="1">
    <location>
        <position position="177"/>
    </location>
    <ligand>
        <name>substrate</name>
    </ligand>
</feature>
<feature type="binding site" description="via carbamate group" evidence="1">
    <location>
        <position position="201"/>
    </location>
    <ligand>
        <name>Mg(2+)</name>
        <dbReference type="ChEBI" id="CHEBI:18420"/>
    </ligand>
</feature>
<feature type="binding site" evidence="1">
    <location>
        <position position="203"/>
    </location>
    <ligand>
        <name>Mg(2+)</name>
        <dbReference type="ChEBI" id="CHEBI:18420"/>
    </ligand>
</feature>
<feature type="binding site" evidence="1">
    <location>
        <position position="204"/>
    </location>
    <ligand>
        <name>Mg(2+)</name>
        <dbReference type="ChEBI" id="CHEBI:18420"/>
    </ligand>
</feature>
<feature type="binding site" evidence="1">
    <location>
        <position position="295"/>
    </location>
    <ligand>
        <name>substrate</name>
    </ligand>
</feature>
<feature type="binding site" evidence="1">
    <location>
        <position position="327"/>
    </location>
    <ligand>
        <name>substrate</name>
    </ligand>
</feature>
<feature type="binding site" evidence="1">
    <location>
        <position position="379"/>
    </location>
    <ligand>
        <name>substrate</name>
    </ligand>
</feature>
<feature type="site" description="Transition state stabilizer" evidence="1">
    <location>
        <position position="334"/>
    </location>
</feature>
<feature type="modified residue" description="N-acetylproline" evidence="1">
    <location>
        <position position="3"/>
    </location>
</feature>
<feature type="modified residue" description="N6,N6,N6-trimethyllysine" evidence="1">
    <location>
        <position position="14"/>
    </location>
</feature>
<feature type="modified residue" description="N6-carboxylysine" evidence="1">
    <location>
        <position position="201"/>
    </location>
</feature>
<feature type="disulfide bond" description="Interchain; in linked form" evidence="1">
    <location>
        <position position="247"/>
    </location>
</feature>
<feature type="non-terminal residue">
    <location>
        <position position="459"/>
    </location>
</feature>
<name>RBL_CORLA</name>
<reference key="1">
    <citation type="submission" date="1995-04" db="EMBL/GenBank/DDBJ databases">
        <authorList>
            <person name="Savolainen V."/>
        </authorList>
    </citation>
    <scope>NUCLEOTIDE SEQUENCE [GENOMIC DNA]</scope>
    <source>
        <strain>Sample CLA4</strain>
    </source>
</reference>
<reference key="2">
    <citation type="journal article" date="1994" name="Mol. Phylogenet. Evol.">
        <title>Molecular phylogeny of families related to Celastrales based on rbcL 5' flanking sequences.</title>
        <authorList>
            <person name="Savolainen V."/>
            <person name="Manen J.F."/>
            <person name="Douzery E.J.P."/>
            <person name="Spichiger R."/>
        </authorList>
    </citation>
    <scope>NUCLEOTIDE SEQUENCE [GENOMIC DNA] OF 1-50</scope>
    <source>
        <strain>Sample CLA4</strain>
    </source>
</reference>
<gene>
    <name evidence="1" type="primary">rbcL</name>
</gene>
<evidence type="ECO:0000255" key="1">
    <source>
        <dbReference type="HAMAP-Rule" id="MF_01338"/>
    </source>
</evidence>
<organism>
    <name type="scientific">Corynocarpus laevigatus</name>
    <name type="common">New Zealand laurel</name>
    <dbReference type="NCBI Taxonomy" id="4312"/>
    <lineage>
        <taxon>Eukaryota</taxon>
        <taxon>Viridiplantae</taxon>
        <taxon>Streptophyta</taxon>
        <taxon>Embryophyta</taxon>
        <taxon>Tracheophyta</taxon>
        <taxon>Spermatophyta</taxon>
        <taxon>Magnoliopsida</taxon>
        <taxon>eudicotyledons</taxon>
        <taxon>Gunneridae</taxon>
        <taxon>Pentapetalae</taxon>
        <taxon>rosids</taxon>
        <taxon>fabids</taxon>
        <taxon>Cucurbitales</taxon>
        <taxon>Corynocarpaceae</taxon>
        <taxon>Corynocarpus</taxon>
    </lineage>
</organism>
<protein>
    <recommendedName>
        <fullName evidence="1">Ribulose bisphosphate carboxylase large chain</fullName>
        <shortName evidence="1">RuBisCO large subunit</shortName>
        <ecNumber evidence="1">4.1.1.39</ecNumber>
    </recommendedName>
</protein>
<proteinExistence type="inferred from homology"/>
<accession>P31183</accession>
<sequence length="459" mass="50456">MSPQTETKASVGFKAGVKDYKLTYYTPEYETKDTDILAAFRVTPQPGVPPEEAGAAVAAESSTGTWTTVWTDGLTSLDRYKGRCYHIEPVAGEENQYIAYVAYPLDLFEEGSVTNMFTSIVGXVFGFKALRALRLEDLRIPPAYVKTFQGPPHGIQVERDKLNKXGRPLLGCTIKPKLGLSAKNYGRAVYECLRGGLDFTKDDENVNSQPFMRWRDRFLFCAEALFKAQAETGEIKGHYLNATAGTCEEMIKRAVFARELGVPIVMHDYLTGGFTANTSLAHYCRDNGLLLHIHRAMHAVIDRQKNHGIHFRVLAKALRMSGGDHIHAGTVVGKLEGERDITLGFVDLLRDDFIEKDRSRGIYFTQDWVSLPGVLPVASGGIHVWHMPALTEIFGDDSVLQFGGGTIGHPWGNAPGAVAGRVALEACVQARNEGRDLAREGNAIILEASKWSPELAAAC</sequence>
<keyword id="KW-0007">Acetylation</keyword>
<keyword id="KW-0113">Calvin cycle</keyword>
<keyword id="KW-0120">Carbon dioxide fixation</keyword>
<keyword id="KW-0150">Chloroplast</keyword>
<keyword id="KW-1015">Disulfide bond</keyword>
<keyword id="KW-0456">Lyase</keyword>
<keyword id="KW-0460">Magnesium</keyword>
<keyword id="KW-0479">Metal-binding</keyword>
<keyword id="KW-0488">Methylation</keyword>
<keyword id="KW-0503">Monooxygenase</keyword>
<keyword id="KW-0560">Oxidoreductase</keyword>
<keyword id="KW-0601">Photorespiration</keyword>
<keyword id="KW-0602">Photosynthesis</keyword>
<keyword id="KW-0934">Plastid</keyword>
<dbReference type="EC" id="4.1.1.39" evidence="1"/>
<dbReference type="EMBL" id="X69731">
    <property type="protein sequence ID" value="CAA49386.1"/>
    <property type="molecule type" value="Genomic_DNA"/>
</dbReference>
<dbReference type="PIR" id="S31544">
    <property type="entry name" value="S31544"/>
</dbReference>
<dbReference type="GO" id="GO:0009507">
    <property type="term" value="C:chloroplast"/>
    <property type="evidence" value="ECO:0007669"/>
    <property type="project" value="UniProtKB-SubCell"/>
</dbReference>
<dbReference type="GO" id="GO:0000287">
    <property type="term" value="F:magnesium ion binding"/>
    <property type="evidence" value="ECO:0007669"/>
    <property type="project" value="InterPro"/>
</dbReference>
<dbReference type="GO" id="GO:0004497">
    <property type="term" value="F:monooxygenase activity"/>
    <property type="evidence" value="ECO:0007669"/>
    <property type="project" value="UniProtKB-KW"/>
</dbReference>
<dbReference type="GO" id="GO:0016984">
    <property type="term" value="F:ribulose-bisphosphate carboxylase activity"/>
    <property type="evidence" value="ECO:0007669"/>
    <property type="project" value="UniProtKB-EC"/>
</dbReference>
<dbReference type="GO" id="GO:0009853">
    <property type="term" value="P:photorespiration"/>
    <property type="evidence" value="ECO:0007669"/>
    <property type="project" value="UniProtKB-KW"/>
</dbReference>
<dbReference type="GO" id="GO:0019253">
    <property type="term" value="P:reductive pentose-phosphate cycle"/>
    <property type="evidence" value="ECO:0007669"/>
    <property type="project" value="UniProtKB-KW"/>
</dbReference>
<dbReference type="CDD" id="cd08212">
    <property type="entry name" value="RuBisCO_large_I"/>
    <property type="match status" value="1"/>
</dbReference>
<dbReference type="FunFam" id="3.20.20.110:FF:000001">
    <property type="entry name" value="Ribulose bisphosphate carboxylase large chain"/>
    <property type="match status" value="1"/>
</dbReference>
<dbReference type="FunFam" id="3.30.70.150:FF:000001">
    <property type="entry name" value="Ribulose bisphosphate carboxylase large chain"/>
    <property type="match status" value="1"/>
</dbReference>
<dbReference type="Gene3D" id="3.20.20.110">
    <property type="entry name" value="Ribulose bisphosphate carboxylase, large subunit, C-terminal domain"/>
    <property type="match status" value="1"/>
</dbReference>
<dbReference type="Gene3D" id="3.30.70.150">
    <property type="entry name" value="RuBisCO large subunit, N-terminal domain"/>
    <property type="match status" value="1"/>
</dbReference>
<dbReference type="HAMAP" id="MF_01338">
    <property type="entry name" value="RuBisCO_L_type1"/>
    <property type="match status" value="1"/>
</dbReference>
<dbReference type="InterPro" id="IPR033966">
    <property type="entry name" value="RuBisCO"/>
</dbReference>
<dbReference type="InterPro" id="IPR020878">
    <property type="entry name" value="RuBisCo_large_chain_AS"/>
</dbReference>
<dbReference type="InterPro" id="IPR000685">
    <property type="entry name" value="RuBisCO_lsu_C"/>
</dbReference>
<dbReference type="InterPro" id="IPR036376">
    <property type="entry name" value="RuBisCO_lsu_C_sf"/>
</dbReference>
<dbReference type="InterPro" id="IPR017443">
    <property type="entry name" value="RuBisCO_lsu_fd_N"/>
</dbReference>
<dbReference type="InterPro" id="IPR036422">
    <property type="entry name" value="RuBisCO_lsu_N_sf"/>
</dbReference>
<dbReference type="InterPro" id="IPR020888">
    <property type="entry name" value="RuBisCO_lsuI"/>
</dbReference>
<dbReference type="NCBIfam" id="NF003252">
    <property type="entry name" value="PRK04208.1"/>
    <property type="match status" value="1"/>
</dbReference>
<dbReference type="PANTHER" id="PTHR42704">
    <property type="entry name" value="RIBULOSE BISPHOSPHATE CARBOXYLASE"/>
    <property type="match status" value="1"/>
</dbReference>
<dbReference type="PANTHER" id="PTHR42704:SF15">
    <property type="entry name" value="RIBULOSE BISPHOSPHATE CARBOXYLASE LARGE CHAIN"/>
    <property type="match status" value="1"/>
</dbReference>
<dbReference type="Pfam" id="PF00016">
    <property type="entry name" value="RuBisCO_large"/>
    <property type="match status" value="1"/>
</dbReference>
<dbReference type="Pfam" id="PF02788">
    <property type="entry name" value="RuBisCO_large_N"/>
    <property type="match status" value="1"/>
</dbReference>
<dbReference type="SFLD" id="SFLDG01052">
    <property type="entry name" value="RuBisCO"/>
    <property type="match status" value="1"/>
</dbReference>
<dbReference type="SFLD" id="SFLDS00014">
    <property type="entry name" value="RuBisCO"/>
    <property type="match status" value="1"/>
</dbReference>
<dbReference type="SFLD" id="SFLDG00301">
    <property type="entry name" value="RuBisCO-like_proteins"/>
    <property type="match status" value="1"/>
</dbReference>
<dbReference type="SUPFAM" id="SSF51649">
    <property type="entry name" value="RuBisCo, C-terminal domain"/>
    <property type="match status" value="1"/>
</dbReference>
<dbReference type="SUPFAM" id="SSF54966">
    <property type="entry name" value="RuBisCO, large subunit, small (N-terminal) domain"/>
    <property type="match status" value="1"/>
</dbReference>
<dbReference type="PROSITE" id="PS00157">
    <property type="entry name" value="RUBISCO_LARGE"/>
    <property type="match status" value="1"/>
</dbReference>